<dbReference type="EC" id="2.5.1.3" evidence="1"/>
<dbReference type="EMBL" id="CP000562">
    <property type="protein sequence ID" value="ABN56195.1"/>
    <property type="molecule type" value="Genomic_DNA"/>
</dbReference>
<dbReference type="RefSeq" id="WP_011843116.1">
    <property type="nucleotide sequence ID" value="NC_009051.1"/>
</dbReference>
<dbReference type="SMR" id="A3CS45"/>
<dbReference type="STRING" id="368407.Memar_0261"/>
<dbReference type="GeneID" id="4846234"/>
<dbReference type="GeneID" id="76730838"/>
<dbReference type="KEGG" id="mem:Memar_0261"/>
<dbReference type="eggNOG" id="arCOG01089">
    <property type="taxonomic scope" value="Archaea"/>
</dbReference>
<dbReference type="HOGENOM" id="CLU_018272_3_2_2"/>
<dbReference type="OrthoDB" id="85572at2157"/>
<dbReference type="UniPathway" id="UPA00060">
    <property type="reaction ID" value="UER00141"/>
</dbReference>
<dbReference type="Proteomes" id="UP000002146">
    <property type="component" value="Chromosome"/>
</dbReference>
<dbReference type="GO" id="GO:0005737">
    <property type="term" value="C:cytoplasm"/>
    <property type="evidence" value="ECO:0007669"/>
    <property type="project" value="TreeGrafter"/>
</dbReference>
<dbReference type="GO" id="GO:0000287">
    <property type="term" value="F:magnesium ion binding"/>
    <property type="evidence" value="ECO:0007669"/>
    <property type="project" value="UniProtKB-UniRule"/>
</dbReference>
<dbReference type="GO" id="GO:0004789">
    <property type="term" value="F:thiamine-phosphate diphosphorylase activity"/>
    <property type="evidence" value="ECO:0007669"/>
    <property type="project" value="UniProtKB-UniRule"/>
</dbReference>
<dbReference type="GO" id="GO:0009228">
    <property type="term" value="P:thiamine biosynthetic process"/>
    <property type="evidence" value="ECO:0007669"/>
    <property type="project" value="UniProtKB-KW"/>
</dbReference>
<dbReference type="GO" id="GO:0009229">
    <property type="term" value="P:thiamine diphosphate biosynthetic process"/>
    <property type="evidence" value="ECO:0007669"/>
    <property type="project" value="UniProtKB-UniRule"/>
</dbReference>
<dbReference type="CDD" id="cd00564">
    <property type="entry name" value="TMP_TenI"/>
    <property type="match status" value="1"/>
</dbReference>
<dbReference type="FunFam" id="3.20.20.70:FF:000096">
    <property type="entry name" value="Thiamine-phosphate synthase"/>
    <property type="match status" value="1"/>
</dbReference>
<dbReference type="Gene3D" id="3.20.20.70">
    <property type="entry name" value="Aldolase class I"/>
    <property type="match status" value="1"/>
</dbReference>
<dbReference type="HAMAP" id="MF_00097">
    <property type="entry name" value="TMP_synthase"/>
    <property type="match status" value="1"/>
</dbReference>
<dbReference type="InterPro" id="IPR013785">
    <property type="entry name" value="Aldolase_TIM"/>
</dbReference>
<dbReference type="InterPro" id="IPR036206">
    <property type="entry name" value="ThiamineP_synth_sf"/>
</dbReference>
<dbReference type="InterPro" id="IPR022998">
    <property type="entry name" value="ThiamineP_synth_TenI"/>
</dbReference>
<dbReference type="InterPro" id="IPR034291">
    <property type="entry name" value="TMP_synthase"/>
</dbReference>
<dbReference type="NCBIfam" id="TIGR00693">
    <property type="entry name" value="thiE"/>
    <property type="match status" value="1"/>
</dbReference>
<dbReference type="PANTHER" id="PTHR20857">
    <property type="entry name" value="THIAMINE-PHOSPHATE PYROPHOSPHORYLASE"/>
    <property type="match status" value="1"/>
</dbReference>
<dbReference type="PANTHER" id="PTHR20857:SF15">
    <property type="entry name" value="THIAMINE-PHOSPHATE SYNTHASE"/>
    <property type="match status" value="1"/>
</dbReference>
<dbReference type="Pfam" id="PF02581">
    <property type="entry name" value="TMP-TENI"/>
    <property type="match status" value="1"/>
</dbReference>
<dbReference type="SUPFAM" id="SSF51391">
    <property type="entry name" value="Thiamin phosphate synthase"/>
    <property type="match status" value="1"/>
</dbReference>
<reference key="1">
    <citation type="journal article" date="2009" name="Stand. Genomic Sci.">
        <title>Complete genome sequence of Methanoculleus marisnigri Romesser et al. 1981 type strain JR1.</title>
        <authorList>
            <person name="Anderson I.J."/>
            <person name="Sieprawska-Lupa M."/>
            <person name="Lapidus A."/>
            <person name="Nolan M."/>
            <person name="Copeland A."/>
            <person name="Glavina Del Rio T."/>
            <person name="Tice H."/>
            <person name="Dalin E."/>
            <person name="Barry K."/>
            <person name="Saunders E."/>
            <person name="Han C."/>
            <person name="Brettin T."/>
            <person name="Detter J.C."/>
            <person name="Bruce D."/>
            <person name="Mikhailova N."/>
            <person name="Pitluck S."/>
            <person name="Hauser L."/>
            <person name="Land M."/>
            <person name="Lucas S."/>
            <person name="Richardson P."/>
            <person name="Whitman W.B."/>
            <person name="Kyrpides N.C."/>
        </authorList>
    </citation>
    <scope>NUCLEOTIDE SEQUENCE [LARGE SCALE GENOMIC DNA]</scope>
    <source>
        <strain>ATCC 35101 / DSM 1498 / JR1</strain>
    </source>
</reference>
<gene>
    <name evidence="1" type="primary">thiE</name>
    <name type="ordered locus">Memar_0261</name>
</gene>
<proteinExistence type="inferred from homology"/>
<protein>
    <recommendedName>
        <fullName evidence="1">Thiamine-phosphate synthase</fullName>
        <shortName evidence="1">TP synthase</shortName>
        <shortName evidence="1">TPS</shortName>
        <ecNumber evidence="1">2.5.1.3</ecNumber>
    </recommendedName>
    <alternativeName>
        <fullName evidence="1">Thiamine-phosphate pyrophosphorylase</fullName>
        <shortName evidence="1">TMP pyrophosphorylase</shortName>
        <shortName evidence="1">TMP-PPase</shortName>
    </alternativeName>
</protein>
<keyword id="KW-0460">Magnesium</keyword>
<keyword id="KW-0479">Metal-binding</keyword>
<keyword id="KW-0784">Thiamine biosynthesis</keyword>
<keyword id="KW-0808">Transferase</keyword>
<evidence type="ECO:0000255" key="1">
    <source>
        <dbReference type="HAMAP-Rule" id="MF_00097"/>
    </source>
</evidence>
<feature type="chain" id="PRO_0000336435" description="Thiamine-phosphate synthase">
    <location>
        <begin position="1"/>
        <end position="211"/>
    </location>
</feature>
<feature type="binding site" evidence="1">
    <location>
        <begin position="35"/>
        <end position="39"/>
    </location>
    <ligand>
        <name>4-amino-2-methyl-5-(diphosphooxymethyl)pyrimidine</name>
        <dbReference type="ChEBI" id="CHEBI:57841"/>
    </ligand>
</feature>
<feature type="binding site" evidence="1">
    <location>
        <position position="67"/>
    </location>
    <ligand>
        <name>4-amino-2-methyl-5-(diphosphooxymethyl)pyrimidine</name>
        <dbReference type="ChEBI" id="CHEBI:57841"/>
    </ligand>
</feature>
<feature type="binding site" evidence="1">
    <location>
        <position position="68"/>
    </location>
    <ligand>
        <name>Mg(2+)</name>
        <dbReference type="ChEBI" id="CHEBI:18420"/>
    </ligand>
</feature>
<feature type="binding site" evidence="1">
    <location>
        <position position="87"/>
    </location>
    <ligand>
        <name>Mg(2+)</name>
        <dbReference type="ChEBI" id="CHEBI:18420"/>
    </ligand>
</feature>
<feature type="binding site" evidence="1">
    <location>
        <position position="106"/>
    </location>
    <ligand>
        <name>4-amino-2-methyl-5-(diphosphooxymethyl)pyrimidine</name>
        <dbReference type="ChEBI" id="CHEBI:57841"/>
    </ligand>
</feature>
<feature type="binding site" evidence="1">
    <location>
        <begin position="132"/>
        <end position="134"/>
    </location>
    <ligand>
        <name>2-[(2R,5Z)-2-carboxy-4-methylthiazol-5(2H)-ylidene]ethyl phosphate</name>
        <dbReference type="ChEBI" id="CHEBI:62899"/>
    </ligand>
</feature>
<feature type="binding site" evidence="1">
    <location>
        <position position="135"/>
    </location>
    <ligand>
        <name>4-amino-2-methyl-5-(diphosphooxymethyl)pyrimidine</name>
        <dbReference type="ChEBI" id="CHEBI:57841"/>
    </ligand>
</feature>
<feature type="binding site" evidence="1">
    <location>
        <position position="163"/>
    </location>
    <ligand>
        <name>2-[(2R,5Z)-2-carboxy-4-methylthiazol-5(2H)-ylidene]ethyl phosphate</name>
        <dbReference type="ChEBI" id="CHEBI:62899"/>
    </ligand>
</feature>
<feature type="binding site" evidence="1">
    <location>
        <begin position="183"/>
        <end position="184"/>
    </location>
    <ligand>
        <name>2-[(2R,5Z)-2-carboxy-4-methylthiazol-5(2H)-ylidene]ethyl phosphate</name>
        <dbReference type="ChEBI" id="CHEBI:62899"/>
    </ligand>
</feature>
<name>THIE_METMJ</name>
<comment type="function">
    <text evidence="1">Condenses 4-methyl-5-(beta-hydroxyethyl)thiazole monophosphate (THZ-P) and 2-methyl-4-amino-5-hydroxymethyl pyrimidine pyrophosphate (HMP-PP) to form thiamine monophosphate (TMP).</text>
</comment>
<comment type="catalytic activity">
    <reaction evidence="1">
        <text>2-[(2R,5Z)-2-carboxy-4-methylthiazol-5(2H)-ylidene]ethyl phosphate + 4-amino-2-methyl-5-(diphosphooxymethyl)pyrimidine + 2 H(+) = thiamine phosphate + CO2 + diphosphate</text>
        <dbReference type="Rhea" id="RHEA:47844"/>
        <dbReference type="ChEBI" id="CHEBI:15378"/>
        <dbReference type="ChEBI" id="CHEBI:16526"/>
        <dbReference type="ChEBI" id="CHEBI:33019"/>
        <dbReference type="ChEBI" id="CHEBI:37575"/>
        <dbReference type="ChEBI" id="CHEBI:57841"/>
        <dbReference type="ChEBI" id="CHEBI:62899"/>
        <dbReference type="EC" id="2.5.1.3"/>
    </reaction>
</comment>
<comment type="catalytic activity">
    <reaction evidence="1">
        <text>2-(2-carboxy-4-methylthiazol-5-yl)ethyl phosphate + 4-amino-2-methyl-5-(diphosphooxymethyl)pyrimidine + 2 H(+) = thiamine phosphate + CO2 + diphosphate</text>
        <dbReference type="Rhea" id="RHEA:47848"/>
        <dbReference type="ChEBI" id="CHEBI:15378"/>
        <dbReference type="ChEBI" id="CHEBI:16526"/>
        <dbReference type="ChEBI" id="CHEBI:33019"/>
        <dbReference type="ChEBI" id="CHEBI:37575"/>
        <dbReference type="ChEBI" id="CHEBI:57841"/>
        <dbReference type="ChEBI" id="CHEBI:62890"/>
        <dbReference type="EC" id="2.5.1.3"/>
    </reaction>
</comment>
<comment type="catalytic activity">
    <reaction evidence="1">
        <text>4-methyl-5-(2-phosphooxyethyl)-thiazole + 4-amino-2-methyl-5-(diphosphooxymethyl)pyrimidine + H(+) = thiamine phosphate + diphosphate</text>
        <dbReference type="Rhea" id="RHEA:22328"/>
        <dbReference type="ChEBI" id="CHEBI:15378"/>
        <dbReference type="ChEBI" id="CHEBI:33019"/>
        <dbReference type="ChEBI" id="CHEBI:37575"/>
        <dbReference type="ChEBI" id="CHEBI:57841"/>
        <dbReference type="ChEBI" id="CHEBI:58296"/>
        <dbReference type="EC" id="2.5.1.3"/>
    </reaction>
</comment>
<comment type="cofactor">
    <cofactor evidence="1">
        <name>Mg(2+)</name>
        <dbReference type="ChEBI" id="CHEBI:18420"/>
    </cofactor>
    <text evidence="1">Binds 1 Mg(2+) ion per subunit.</text>
</comment>
<comment type="pathway">
    <text evidence="1">Cofactor biosynthesis; thiamine diphosphate biosynthesis; thiamine phosphate from 4-amino-2-methyl-5-diphosphomethylpyrimidine and 4-methyl-5-(2-phosphoethyl)-thiazole: step 1/1.</text>
</comment>
<comment type="similarity">
    <text evidence="1">Belongs to the thiamine-phosphate synthase family.</text>
</comment>
<accession>A3CS45</accession>
<organism>
    <name type="scientific">Methanoculleus marisnigri (strain ATCC 35101 / DSM 1498 / JR1)</name>
    <dbReference type="NCBI Taxonomy" id="368407"/>
    <lineage>
        <taxon>Archaea</taxon>
        <taxon>Methanobacteriati</taxon>
        <taxon>Methanobacteriota</taxon>
        <taxon>Stenosarchaea group</taxon>
        <taxon>Methanomicrobia</taxon>
        <taxon>Methanomicrobiales</taxon>
        <taxon>Methanomicrobiaceae</taxon>
        <taxon>Methanoculleus</taxon>
    </lineage>
</organism>
<sequence>MGYDLYVVTDETIGRGRTHTDLARLAAAGGADVIQLRDKRLPGRDLLSAAVAIREITTDAGALFIVNDRLDVAIAAGADGVHLGANDLPVGEARRIVPPGFLIGASVGSVAAAVRAAAEGADYVALSPTFATGSKDDAGPGCGLAALKEIRAAVSLPLVAIGGITAANVADVIAAGADGVAVISAVVGEGDVTAAARSLRDRIAAAKAEGR</sequence>